<keyword id="KW-0665">Pyrimidine biosynthesis</keyword>
<keyword id="KW-1185">Reference proteome</keyword>
<keyword id="KW-0808">Transferase</keyword>
<gene>
    <name evidence="1" type="primary">pyrB</name>
    <name type="ordered locus">Synpcc7942_0670</name>
</gene>
<sequence>MSDWQRRHILSLADFSPVEYEMVLRTAAGFAEVLQRRNKKVPTLQGQVVTTLFFEPSTRTRSSFELAAKRLSADTINFAASSSSLSKGETILDTARTYLAMGSDIMVVRHAQAGVPQAIAREMERLGTEVRVLNAGDGQHEHPSQALLDLFTICSVIQPEQPSLGAIAGKKIAIVGDILHSRVARSNIWSLTAAGAEVHLAAPPTLLPPEFAQFANTPIPGSGLPRQLQIHWQLESALENADFVMTLRLQQERMSQSLLPSLREYHREFGLTRDRLRVCQPSVKLLHPGPVNRGVELSSDLMEDESISLIQPQVTNGVAVRMALLYLIGAAVPAAIPA</sequence>
<protein>
    <recommendedName>
        <fullName evidence="1">Aspartate carbamoyltransferase catalytic subunit</fullName>
        <ecNumber evidence="1">2.1.3.2</ecNumber>
    </recommendedName>
    <alternativeName>
        <fullName evidence="1">Aspartate transcarbamylase</fullName>
        <shortName evidence="1">ATCase</shortName>
    </alternativeName>
</protein>
<reference key="1">
    <citation type="submission" date="2005-08" db="EMBL/GenBank/DDBJ databases">
        <title>Complete sequence of chromosome 1 of Synechococcus elongatus PCC 7942.</title>
        <authorList>
            <consortium name="US DOE Joint Genome Institute"/>
            <person name="Copeland A."/>
            <person name="Lucas S."/>
            <person name="Lapidus A."/>
            <person name="Barry K."/>
            <person name="Detter J.C."/>
            <person name="Glavina T."/>
            <person name="Hammon N."/>
            <person name="Israni S."/>
            <person name="Pitluck S."/>
            <person name="Schmutz J."/>
            <person name="Larimer F."/>
            <person name="Land M."/>
            <person name="Kyrpides N."/>
            <person name="Lykidis A."/>
            <person name="Golden S."/>
            <person name="Richardson P."/>
        </authorList>
    </citation>
    <scope>NUCLEOTIDE SEQUENCE [LARGE SCALE GENOMIC DNA]</scope>
    <source>
        <strain>ATCC 33912 / PCC 7942 / FACHB-805</strain>
    </source>
</reference>
<name>PYRB_SYNE7</name>
<dbReference type="EC" id="2.1.3.2" evidence="1"/>
<dbReference type="EMBL" id="CP000100">
    <property type="protein sequence ID" value="ABB56702.1"/>
    <property type="molecule type" value="Genomic_DNA"/>
</dbReference>
<dbReference type="RefSeq" id="WP_011243171.1">
    <property type="nucleotide sequence ID" value="NZ_JACJTX010000005.1"/>
</dbReference>
<dbReference type="SMR" id="Q31QG7"/>
<dbReference type="STRING" id="1140.Synpcc7942_0670"/>
<dbReference type="PaxDb" id="1140-Synpcc7942_0670"/>
<dbReference type="KEGG" id="syf:Synpcc7942_0670"/>
<dbReference type="eggNOG" id="COG0540">
    <property type="taxonomic scope" value="Bacteria"/>
</dbReference>
<dbReference type="HOGENOM" id="CLU_043846_2_0_3"/>
<dbReference type="OrthoDB" id="9774690at2"/>
<dbReference type="BioCyc" id="SYNEL:SYNPCC7942_0670-MONOMER"/>
<dbReference type="UniPathway" id="UPA00070">
    <property type="reaction ID" value="UER00116"/>
</dbReference>
<dbReference type="Proteomes" id="UP000889800">
    <property type="component" value="Chromosome"/>
</dbReference>
<dbReference type="GO" id="GO:0005829">
    <property type="term" value="C:cytosol"/>
    <property type="evidence" value="ECO:0007669"/>
    <property type="project" value="TreeGrafter"/>
</dbReference>
<dbReference type="GO" id="GO:0016597">
    <property type="term" value="F:amino acid binding"/>
    <property type="evidence" value="ECO:0007669"/>
    <property type="project" value="InterPro"/>
</dbReference>
<dbReference type="GO" id="GO:0004070">
    <property type="term" value="F:aspartate carbamoyltransferase activity"/>
    <property type="evidence" value="ECO:0007669"/>
    <property type="project" value="UniProtKB-UniRule"/>
</dbReference>
<dbReference type="GO" id="GO:0006207">
    <property type="term" value="P:'de novo' pyrimidine nucleobase biosynthetic process"/>
    <property type="evidence" value="ECO:0007669"/>
    <property type="project" value="InterPro"/>
</dbReference>
<dbReference type="GO" id="GO:0044205">
    <property type="term" value="P:'de novo' UMP biosynthetic process"/>
    <property type="evidence" value="ECO:0007669"/>
    <property type="project" value="UniProtKB-UniRule"/>
</dbReference>
<dbReference type="GO" id="GO:0006520">
    <property type="term" value="P:amino acid metabolic process"/>
    <property type="evidence" value="ECO:0007669"/>
    <property type="project" value="InterPro"/>
</dbReference>
<dbReference type="Gene3D" id="3.40.50.1370">
    <property type="entry name" value="Aspartate/ornithine carbamoyltransferase"/>
    <property type="match status" value="2"/>
</dbReference>
<dbReference type="HAMAP" id="MF_00001">
    <property type="entry name" value="Asp_carb_tr"/>
    <property type="match status" value="1"/>
</dbReference>
<dbReference type="InterPro" id="IPR006132">
    <property type="entry name" value="Asp/Orn_carbamoyltranf_P-bd"/>
</dbReference>
<dbReference type="InterPro" id="IPR006130">
    <property type="entry name" value="Asp/Orn_carbamoylTrfase"/>
</dbReference>
<dbReference type="InterPro" id="IPR036901">
    <property type="entry name" value="Asp/Orn_carbamoylTrfase_sf"/>
</dbReference>
<dbReference type="InterPro" id="IPR002082">
    <property type="entry name" value="Asp_carbamoyltransf"/>
</dbReference>
<dbReference type="InterPro" id="IPR006131">
    <property type="entry name" value="Asp_carbamoyltransf_Asp/Orn-bd"/>
</dbReference>
<dbReference type="NCBIfam" id="TIGR00670">
    <property type="entry name" value="asp_carb_tr"/>
    <property type="match status" value="1"/>
</dbReference>
<dbReference type="NCBIfam" id="NF002032">
    <property type="entry name" value="PRK00856.1"/>
    <property type="match status" value="1"/>
</dbReference>
<dbReference type="PANTHER" id="PTHR45753:SF6">
    <property type="entry name" value="ASPARTATE CARBAMOYLTRANSFERASE"/>
    <property type="match status" value="1"/>
</dbReference>
<dbReference type="PANTHER" id="PTHR45753">
    <property type="entry name" value="ORNITHINE CARBAMOYLTRANSFERASE, MITOCHONDRIAL"/>
    <property type="match status" value="1"/>
</dbReference>
<dbReference type="Pfam" id="PF00185">
    <property type="entry name" value="OTCace"/>
    <property type="match status" value="1"/>
</dbReference>
<dbReference type="Pfam" id="PF02729">
    <property type="entry name" value="OTCace_N"/>
    <property type="match status" value="1"/>
</dbReference>
<dbReference type="PRINTS" id="PR00100">
    <property type="entry name" value="AOTCASE"/>
</dbReference>
<dbReference type="PRINTS" id="PR00101">
    <property type="entry name" value="ATCASE"/>
</dbReference>
<dbReference type="SUPFAM" id="SSF53671">
    <property type="entry name" value="Aspartate/ornithine carbamoyltransferase"/>
    <property type="match status" value="1"/>
</dbReference>
<dbReference type="PROSITE" id="PS00097">
    <property type="entry name" value="CARBAMOYLTRANSFERASE"/>
    <property type="match status" value="1"/>
</dbReference>
<proteinExistence type="inferred from homology"/>
<evidence type="ECO:0000255" key="1">
    <source>
        <dbReference type="HAMAP-Rule" id="MF_00001"/>
    </source>
</evidence>
<accession>Q31QG7</accession>
<comment type="function">
    <text evidence="1">Catalyzes the condensation of carbamoyl phosphate and aspartate to form carbamoyl aspartate and inorganic phosphate, the committed step in the de novo pyrimidine nucleotide biosynthesis pathway.</text>
</comment>
<comment type="catalytic activity">
    <reaction evidence="1">
        <text>carbamoyl phosphate + L-aspartate = N-carbamoyl-L-aspartate + phosphate + H(+)</text>
        <dbReference type="Rhea" id="RHEA:20013"/>
        <dbReference type="ChEBI" id="CHEBI:15378"/>
        <dbReference type="ChEBI" id="CHEBI:29991"/>
        <dbReference type="ChEBI" id="CHEBI:32814"/>
        <dbReference type="ChEBI" id="CHEBI:43474"/>
        <dbReference type="ChEBI" id="CHEBI:58228"/>
        <dbReference type="EC" id="2.1.3.2"/>
    </reaction>
</comment>
<comment type="pathway">
    <text evidence="1">Pyrimidine metabolism; UMP biosynthesis via de novo pathway; (S)-dihydroorotate from bicarbonate: step 2/3.</text>
</comment>
<comment type="subunit">
    <text evidence="1">Heterododecamer (2C3:3R2) of six catalytic PyrB chains organized as two trimers (C3), and six regulatory PyrI chains organized as three dimers (R2).</text>
</comment>
<comment type="similarity">
    <text evidence="1">Belongs to the aspartate/ornithine carbamoyltransferase superfamily. ATCase family.</text>
</comment>
<organism>
    <name type="scientific">Synechococcus elongatus (strain ATCC 33912 / PCC 7942 / FACHB-805)</name>
    <name type="common">Anacystis nidulans R2</name>
    <dbReference type="NCBI Taxonomy" id="1140"/>
    <lineage>
        <taxon>Bacteria</taxon>
        <taxon>Bacillati</taxon>
        <taxon>Cyanobacteriota</taxon>
        <taxon>Cyanophyceae</taxon>
        <taxon>Synechococcales</taxon>
        <taxon>Synechococcaceae</taxon>
        <taxon>Synechococcus</taxon>
    </lineage>
</organism>
<feature type="chain" id="PRO_0000301633" description="Aspartate carbamoyltransferase catalytic subunit">
    <location>
        <begin position="1"/>
        <end position="338"/>
    </location>
</feature>
<feature type="binding site" evidence="1">
    <location>
        <position position="59"/>
    </location>
    <ligand>
        <name>carbamoyl phosphate</name>
        <dbReference type="ChEBI" id="CHEBI:58228"/>
    </ligand>
</feature>
<feature type="binding site" evidence="1">
    <location>
        <position position="60"/>
    </location>
    <ligand>
        <name>carbamoyl phosphate</name>
        <dbReference type="ChEBI" id="CHEBI:58228"/>
    </ligand>
</feature>
<feature type="binding site" evidence="1">
    <location>
        <position position="87"/>
    </location>
    <ligand>
        <name>L-aspartate</name>
        <dbReference type="ChEBI" id="CHEBI:29991"/>
    </ligand>
</feature>
<feature type="binding site" evidence="1">
    <location>
        <position position="109"/>
    </location>
    <ligand>
        <name>carbamoyl phosphate</name>
        <dbReference type="ChEBI" id="CHEBI:58228"/>
    </ligand>
</feature>
<feature type="binding site" evidence="1">
    <location>
        <position position="142"/>
    </location>
    <ligand>
        <name>carbamoyl phosphate</name>
        <dbReference type="ChEBI" id="CHEBI:58228"/>
    </ligand>
</feature>
<feature type="binding site" evidence="1">
    <location>
        <position position="145"/>
    </location>
    <ligand>
        <name>carbamoyl phosphate</name>
        <dbReference type="ChEBI" id="CHEBI:58228"/>
    </ligand>
</feature>
<feature type="binding site" evidence="1">
    <location>
        <position position="182"/>
    </location>
    <ligand>
        <name>L-aspartate</name>
        <dbReference type="ChEBI" id="CHEBI:29991"/>
    </ligand>
</feature>
<feature type="binding site" evidence="1">
    <location>
        <position position="248"/>
    </location>
    <ligand>
        <name>L-aspartate</name>
        <dbReference type="ChEBI" id="CHEBI:29991"/>
    </ligand>
</feature>
<feature type="binding site" evidence="1">
    <location>
        <position position="289"/>
    </location>
    <ligand>
        <name>carbamoyl phosphate</name>
        <dbReference type="ChEBI" id="CHEBI:58228"/>
    </ligand>
</feature>
<feature type="binding site" evidence="1">
    <location>
        <position position="290"/>
    </location>
    <ligand>
        <name>carbamoyl phosphate</name>
        <dbReference type="ChEBI" id="CHEBI:58228"/>
    </ligand>
</feature>